<reference key="1">
    <citation type="journal article" date="2005" name="Proc. Natl. Acad. Sci. U.S.A.">
        <title>Whole genome sequence of Staphylococcus saprophyticus reveals the pathogenesis of uncomplicated urinary tract infection.</title>
        <authorList>
            <person name="Kuroda M."/>
            <person name="Yamashita A."/>
            <person name="Hirakawa H."/>
            <person name="Kumano M."/>
            <person name="Morikawa K."/>
            <person name="Higashide M."/>
            <person name="Maruyama A."/>
            <person name="Inose Y."/>
            <person name="Matoba K."/>
            <person name="Toh H."/>
            <person name="Kuhara S."/>
            <person name="Hattori M."/>
            <person name="Ohta T."/>
        </authorList>
    </citation>
    <scope>NUCLEOTIDE SEQUENCE [LARGE SCALE GENOMIC DNA]</scope>
    <source>
        <strain>ATCC 15305 / DSM 20229 / NCIMB 8711 / NCTC 7292 / S-41</strain>
    </source>
</reference>
<feature type="chain" id="PRO_0000232569" description="Flotillin-like protein FloA">
    <location>
        <begin position="1"/>
        <end position="327"/>
    </location>
</feature>
<feature type="transmembrane region" description="Helical" evidence="1">
    <location>
        <begin position="2"/>
        <end position="22"/>
    </location>
</feature>
<feature type="region of interest" description="Disordered" evidence="2">
    <location>
        <begin position="305"/>
        <end position="327"/>
    </location>
</feature>
<feature type="compositionally biased region" description="Basic and acidic residues" evidence="2">
    <location>
        <begin position="318"/>
        <end position="327"/>
    </location>
</feature>
<accession>Q49Y16</accession>
<keyword id="KW-1003">Cell membrane</keyword>
<keyword id="KW-0472">Membrane</keyword>
<keyword id="KW-1185">Reference proteome</keyword>
<keyword id="KW-0812">Transmembrane</keyword>
<keyword id="KW-1133">Transmembrane helix</keyword>
<name>FLOA_STAS1</name>
<gene>
    <name evidence="1" type="primary">floA</name>
    <name type="ordered locus">SSP1183</name>
</gene>
<organism>
    <name type="scientific">Staphylococcus saprophyticus subsp. saprophyticus (strain ATCC 15305 / DSM 20229 / NCIMB 8711 / NCTC 7292 / S-41)</name>
    <dbReference type="NCBI Taxonomy" id="342451"/>
    <lineage>
        <taxon>Bacteria</taxon>
        <taxon>Bacillati</taxon>
        <taxon>Bacillota</taxon>
        <taxon>Bacilli</taxon>
        <taxon>Bacillales</taxon>
        <taxon>Staphylococcaceae</taxon>
        <taxon>Staphylococcus</taxon>
    </lineage>
</organism>
<comment type="function">
    <text evidence="1">Found in functional membrane microdomains (FMM) that may be equivalent to eukaryotic membrane rafts. FMMs are highly dynamic and increase in number as cells age. Flotillins are thought to be important factors in membrane fluidity.</text>
</comment>
<comment type="subunit">
    <text evidence="1">Homooligomerizes.</text>
</comment>
<comment type="subcellular location">
    <subcellularLocation>
        <location evidence="1">Cell membrane</location>
        <topology evidence="1">Single-pass membrane protein</topology>
    </subcellularLocation>
    <subcellularLocation>
        <location evidence="1">Membrane raft</location>
        <topology evidence="1">Single-pass membrane protein</topology>
    </subcellularLocation>
</comment>
<comment type="similarity">
    <text evidence="1">Belongs to the flotillin-like FloA family.</text>
</comment>
<dbReference type="EMBL" id="AP008934">
    <property type="protein sequence ID" value="BAE18328.1"/>
    <property type="molecule type" value="Genomic_DNA"/>
</dbReference>
<dbReference type="RefSeq" id="WP_011302997.1">
    <property type="nucleotide sequence ID" value="NZ_MTGA01000038.1"/>
</dbReference>
<dbReference type="SMR" id="Q49Y16"/>
<dbReference type="GeneID" id="66867412"/>
<dbReference type="KEGG" id="ssp:SSP1183"/>
<dbReference type="eggNOG" id="COG4864">
    <property type="taxonomic scope" value="Bacteria"/>
</dbReference>
<dbReference type="HOGENOM" id="CLU_836378_0_0_9"/>
<dbReference type="OrthoDB" id="9808365at2"/>
<dbReference type="Proteomes" id="UP000006371">
    <property type="component" value="Chromosome"/>
</dbReference>
<dbReference type="GO" id="GO:0045121">
    <property type="term" value="C:membrane raft"/>
    <property type="evidence" value="ECO:0007669"/>
    <property type="project" value="UniProtKB-SubCell"/>
</dbReference>
<dbReference type="GO" id="GO:0005886">
    <property type="term" value="C:plasma membrane"/>
    <property type="evidence" value="ECO:0007669"/>
    <property type="project" value="UniProtKB-SubCell"/>
</dbReference>
<dbReference type="HAMAP" id="MF_01562">
    <property type="entry name" value="FloA"/>
    <property type="match status" value="1"/>
</dbReference>
<dbReference type="InterPro" id="IPR022853">
    <property type="entry name" value="FloA"/>
</dbReference>
<dbReference type="NCBIfam" id="NF010186">
    <property type="entry name" value="PRK13665.1"/>
    <property type="match status" value="1"/>
</dbReference>
<dbReference type="Pfam" id="PF12127">
    <property type="entry name" value="FloA"/>
    <property type="match status" value="1"/>
</dbReference>
<sequence>MIGLIIIVVIVLVALLLLFSFVPVGLWISAIAAGVKVGIGTLVGMRLRRVSPRKVISPLIKAHKAGLHLTTNQLESHYLAGGNVDRVVDANIAAQRADINLPFERGAAIDLAGRDVLEAVQMSVNPKVIETPFIAGVAMNGIEVKAKARITVRANIARLVGGAGEETIIARVGEGIVSTIGSSEHHTQVLENPDNISKTVLSKGLDSGTAFEILSIDIADVDISKNIGADLQTEQALADKNIAQAKAEERRAMAVAQEQEMKAKVQEMRSKVVEAEAEVPLAMAEALRSGNLGVKDYYNLKNVEADTGMRNSINQRTNQKDDESPDK</sequence>
<evidence type="ECO:0000255" key="1">
    <source>
        <dbReference type="HAMAP-Rule" id="MF_01562"/>
    </source>
</evidence>
<evidence type="ECO:0000256" key="2">
    <source>
        <dbReference type="SAM" id="MobiDB-lite"/>
    </source>
</evidence>
<proteinExistence type="inferred from homology"/>
<protein>
    <recommendedName>
        <fullName evidence="1">Flotillin-like protein FloA</fullName>
    </recommendedName>
</protein>